<sequence>MSKKITKNRQKINELIKDVENKIYSLDEAIEMAKKTSFVKFDASIDISLKLNLDTRKADQQLRGSVSLPNGTGKIIRVLATSDEKEQLDLAKKAGANIVANKSDLEEILKSEKFDFDIMVTDPKMMPTLGKYGKVLGPKGLMPNPKTGTVTPNIAKAVEEIKKGKANYRADKGGIINSSIGKVSMGTTSLVENAKVLIDTIRKLKPATVKGIYMQNLTISTTMGPSFKIKIEN</sequence>
<organism>
    <name type="scientific">Mycoplasma mobile (strain ATCC 43663 / 163K / NCTC 11711)</name>
    <name type="common">Mesomycoplasma mobile</name>
    <dbReference type="NCBI Taxonomy" id="267748"/>
    <lineage>
        <taxon>Bacteria</taxon>
        <taxon>Bacillati</taxon>
        <taxon>Mycoplasmatota</taxon>
        <taxon>Mycoplasmoidales</taxon>
        <taxon>Metamycoplasmataceae</taxon>
        <taxon>Mesomycoplasma</taxon>
    </lineage>
</organism>
<dbReference type="EMBL" id="AE017308">
    <property type="protein sequence ID" value="AAT27625.1"/>
    <property type="molecule type" value="Genomic_DNA"/>
</dbReference>
<dbReference type="RefSeq" id="WP_011264659.1">
    <property type="nucleotide sequence ID" value="NC_006908.1"/>
</dbReference>
<dbReference type="SMR" id="Q6KIF1"/>
<dbReference type="STRING" id="267748.MMOB1390"/>
<dbReference type="KEGG" id="mmo:MMOB1390"/>
<dbReference type="eggNOG" id="COG0081">
    <property type="taxonomic scope" value="Bacteria"/>
</dbReference>
<dbReference type="HOGENOM" id="CLU_062853_0_0_14"/>
<dbReference type="OrthoDB" id="9803740at2"/>
<dbReference type="Proteomes" id="UP000009072">
    <property type="component" value="Chromosome"/>
</dbReference>
<dbReference type="GO" id="GO:0015934">
    <property type="term" value="C:large ribosomal subunit"/>
    <property type="evidence" value="ECO:0007669"/>
    <property type="project" value="InterPro"/>
</dbReference>
<dbReference type="GO" id="GO:0019843">
    <property type="term" value="F:rRNA binding"/>
    <property type="evidence" value="ECO:0007669"/>
    <property type="project" value="UniProtKB-UniRule"/>
</dbReference>
<dbReference type="GO" id="GO:0003735">
    <property type="term" value="F:structural constituent of ribosome"/>
    <property type="evidence" value="ECO:0007669"/>
    <property type="project" value="InterPro"/>
</dbReference>
<dbReference type="GO" id="GO:0000049">
    <property type="term" value="F:tRNA binding"/>
    <property type="evidence" value="ECO:0007669"/>
    <property type="project" value="UniProtKB-KW"/>
</dbReference>
<dbReference type="GO" id="GO:0006417">
    <property type="term" value="P:regulation of translation"/>
    <property type="evidence" value="ECO:0007669"/>
    <property type="project" value="UniProtKB-KW"/>
</dbReference>
<dbReference type="GO" id="GO:0006412">
    <property type="term" value="P:translation"/>
    <property type="evidence" value="ECO:0007669"/>
    <property type="project" value="UniProtKB-UniRule"/>
</dbReference>
<dbReference type="CDD" id="cd00403">
    <property type="entry name" value="Ribosomal_L1"/>
    <property type="match status" value="1"/>
</dbReference>
<dbReference type="FunFam" id="3.40.50.790:FF:000001">
    <property type="entry name" value="50S ribosomal protein L1"/>
    <property type="match status" value="1"/>
</dbReference>
<dbReference type="Gene3D" id="3.30.190.20">
    <property type="match status" value="1"/>
</dbReference>
<dbReference type="Gene3D" id="3.40.50.790">
    <property type="match status" value="1"/>
</dbReference>
<dbReference type="HAMAP" id="MF_01318_B">
    <property type="entry name" value="Ribosomal_uL1_B"/>
    <property type="match status" value="1"/>
</dbReference>
<dbReference type="InterPro" id="IPR005878">
    <property type="entry name" value="Ribosom_uL1_bac-type"/>
</dbReference>
<dbReference type="InterPro" id="IPR002143">
    <property type="entry name" value="Ribosomal_uL1"/>
</dbReference>
<dbReference type="InterPro" id="IPR023674">
    <property type="entry name" value="Ribosomal_uL1-like"/>
</dbReference>
<dbReference type="InterPro" id="IPR028364">
    <property type="entry name" value="Ribosomal_uL1/biogenesis"/>
</dbReference>
<dbReference type="InterPro" id="IPR016095">
    <property type="entry name" value="Ribosomal_uL1_3-a/b-sand"/>
</dbReference>
<dbReference type="InterPro" id="IPR023673">
    <property type="entry name" value="Ribosomal_uL1_CS"/>
</dbReference>
<dbReference type="NCBIfam" id="TIGR01169">
    <property type="entry name" value="rplA_bact"/>
    <property type="match status" value="1"/>
</dbReference>
<dbReference type="PANTHER" id="PTHR36427">
    <property type="entry name" value="54S RIBOSOMAL PROTEIN L1, MITOCHONDRIAL"/>
    <property type="match status" value="1"/>
</dbReference>
<dbReference type="PANTHER" id="PTHR36427:SF3">
    <property type="entry name" value="LARGE RIBOSOMAL SUBUNIT PROTEIN UL1M"/>
    <property type="match status" value="1"/>
</dbReference>
<dbReference type="Pfam" id="PF00687">
    <property type="entry name" value="Ribosomal_L1"/>
    <property type="match status" value="1"/>
</dbReference>
<dbReference type="PIRSF" id="PIRSF002155">
    <property type="entry name" value="Ribosomal_L1"/>
    <property type="match status" value="1"/>
</dbReference>
<dbReference type="SUPFAM" id="SSF56808">
    <property type="entry name" value="Ribosomal protein L1"/>
    <property type="match status" value="1"/>
</dbReference>
<dbReference type="PROSITE" id="PS01199">
    <property type="entry name" value="RIBOSOMAL_L1"/>
    <property type="match status" value="1"/>
</dbReference>
<proteinExistence type="inferred from homology"/>
<feature type="chain" id="PRO_0000125689" description="Large ribosomal subunit protein uL1">
    <location>
        <begin position="1"/>
        <end position="233"/>
    </location>
</feature>
<comment type="function">
    <text evidence="1">Binds directly to 23S rRNA. The L1 stalk is quite mobile in the ribosome, and is involved in E site tRNA release.</text>
</comment>
<comment type="function">
    <text evidence="1">Protein L1 is also a translational repressor protein, it controls the translation of the L11 operon by binding to its mRNA.</text>
</comment>
<comment type="subunit">
    <text evidence="1">Part of the 50S ribosomal subunit.</text>
</comment>
<comment type="similarity">
    <text evidence="1">Belongs to the universal ribosomal protein uL1 family.</text>
</comment>
<protein>
    <recommendedName>
        <fullName evidence="1">Large ribosomal subunit protein uL1</fullName>
    </recommendedName>
    <alternativeName>
        <fullName evidence="2">50S ribosomal protein L1</fullName>
    </alternativeName>
</protein>
<gene>
    <name evidence="1" type="primary">rplA</name>
    <name type="ordered locus">MMOB1390</name>
</gene>
<name>RL1_MYCM1</name>
<evidence type="ECO:0000255" key="1">
    <source>
        <dbReference type="HAMAP-Rule" id="MF_01318"/>
    </source>
</evidence>
<evidence type="ECO:0000305" key="2"/>
<reference key="1">
    <citation type="journal article" date="2004" name="Genome Res.">
        <title>The complete genome and proteome of Mycoplasma mobile.</title>
        <authorList>
            <person name="Jaffe J.D."/>
            <person name="Stange-Thomann N."/>
            <person name="Smith C."/>
            <person name="DeCaprio D."/>
            <person name="Fisher S."/>
            <person name="Butler J."/>
            <person name="Calvo S."/>
            <person name="Elkins T."/>
            <person name="FitzGerald M.G."/>
            <person name="Hafez N."/>
            <person name="Kodira C.D."/>
            <person name="Major J."/>
            <person name="Wang S."/>
            <person name="Wilkinson J."/>
            <person name="Nicol R."/>
            <person name="Nusbaum C."/>
            <person name="Birren B."/>
            <person name="Berg H.C."/>
            <person name="Church G.M."/>
        </authorList>
    </citation>
    <scope>NUCLEOTIDE SEQUENCE [LARGE SCALE GENOMIC DNA]</scope>
    <source>
        <strain>ATCC 43663 / NCTC 11711 / 163 K</strain>
    </source>
</reference>
<accession>Q6KIF1</accession>
<keyword id="KW-1185">Reference proteome</keyword>
<keyword id="KW-0678">Repressor</keyword>
<keyword id="KW-0687">Ribonucleoprotein</keyword>
<keyword id="KW-0689">Ribosomal protein</keyword>
<keyword id="KW-0694">RNA-binding</keyword>
<keyword id="KW-0699">rRNA-binding</keyword>
<keyword id="KW-0810">Translation regulation</keyword>
<keyword id="KW-0820">tRNA-binding</keyword>